<sequence>MAMEMAMMGLLGTVVGASAMGIGGIAKSIAEAYVPGVAAAKDRRQQMNVDLQARRYEAVRVWRSGLCSASNAYRQWEAGSRDTHAPNVVGDEWFEGLRPHLPTTGEAAKFRTAYEVRCDNPTLMVLSLEIGRIEKEWMVEASGRTPKHRG</sequence>
<protein>
    <recommendedName>
        <fullName>Uncharacterized protein Mb2319</fullName>
    </recommendedName>
</protein>
<evidence type="ECO:0000255" key="1"/>
<keyword id="KW-1185">Reference proteome</keyword>
<keyword id="KW-0732">Signal</keyword>
<dbReference type="EMBL" id="LT708304">
    <property type="protein sequence ID" value="SIU00931.1"/>
    <property type="molecule type" value="Genomic_DNA"/>
</dbReference>
<dbReference type="RefSeq" id="NP_855968.1">
    <property type="nucleotide sequence ID" value="NC_002945.3"/>
</dbReference>
<dbReference type="RefSeq" id="WP_003411851.1">
    <property type="nucleotide sequence ID" value="NC_002945.4"/>
</dbReference>
<dbReference type="KEGG" id="mbo:BQ2027_MB2319"/>
<dbReference type="PATRIC" id="fig|233413.5.peg.2543"/>
<dbReference type="Proteomes" id="UP000001419">
    <property type="component" value="Chromosome"/>
</dbReference>
<name>Y2319_MYCBO</name>
<organism>
    <name type="scientific">Mycobacterium bovis (strain ATCC BAA-935 / AF2122/97)</name>
    <dbReference type="NCBI Taxonomy" id="233413"/>
    <lineage>
        <taxon>Bacteria</taxon>
        <taxon>Bacillati</taxon>
        <taxon>Actinomycetota</taxon>
        <taxon>Actinomycetes</taxon>
        <taxon>Mycobacteriales</taxon>
        <taxon>Mycobacteriaceae</taxon>
        <taxon>Mycobacterium</taxon>
        <taxon>Mycobacterium tuberculosis complex</taxon>
    </lineage>
</organism>
<accession>P64980</accession>
<accession>A0A1R3Y0S9</accession>
<accession>Q50669</accession>
<accession>X2BJX4</accession>
<reference key="1">
    <citation type="journal article" date="2003" name="Proc. Natl. Acad. Sci. U.S.A.">
        <title>The complete genome sequence of Mycobacterium bovis.</title>
        <authorList>
            <person name="Garnier T."/>
            <person name="Eiglmeier K."/>
            <person name="Camus J.-C."/>
            <person name="Medina N."/>
            <person name="Mansoor H."/>
            <person name="Pryor M."/>
            <person name="Duthoy S."/>
            <person name="Grondin S."/>
            <person name="Lacroix C."/>
            <person name="Monsempe C."/>
            <person name="Simon S."/>
            <person name="Harris B."/>
            <person name="Atkin R."/>
            <person name="Doggett J."/>
            <person name="Mayes R."/>
            <person name="Keating L."/>
            <person name="Wheeler P.R."/>
            <person name="Parkhill J."/>
            <person name="Barrell B.G."/>
            <person name="Cole S.T."/>
            <person name="Gordon S.V."/>
            <person name="Hewinson R.G."/>
        </authorList>
    </citation>
    <scope>NUCLEOTIDE SEQUENCE [LARGE SCALE GENOMIC DNA]</scope>
    <source>
        <strain>ATCC BAA-935 / AF2122/97</strain>
    </source>
</reference>
<reference key="2">
    <citation type="journal article" date="2017" name="Genome Announc.">
        <title>Updated reference genome sequence and annotation of Mycobacterium bovis AF2122/97.</title>
        <authorList>
            <person name="Malone K.M."/>
            <person name="Farrell D."/>
            <person name="Stuber T.P."/>
            <person name="Schubert O.T."/>
            <person name="Aebersold R."/>
            <person name="Robbe-Austerman S."/>
            <person name="Gordon S.V."/>
        </authorList>
    </citation>
    <scope>NUCLEOTIDE SEQUENCE [LARGE SCALE GENOMIC DNA]</scope>
    <scope>GENOME REANNOTATION</scope>
    <source>
        <strain>ATCC BAA-935 / AF2122/97</strain>
    </source>
</reference>
<gene>
    <name type="ordered locus">BQ2027_MB2319</name>
</gene>
<feature type="signal peptide" evidence="1">
    <location>
        <begin position="1"/>
        <end position="21"/>
    </location>
</feature>
<feature type="chain" id="PRO_0000014132" description="Uncharacterized protein Mb2319">
    <location>
        <begin position="22"/>
        <end position="150"/>
    </location>
</feature>
<proteinExistence type="inferred from homology"/>